<reference key="1">
    <citation type="journal article" date="2004" name="Nature">
        <title>The DNA sequence and comparative analysis of human chromosome 10.</title>
        <authorList>
            <person name="Deloukas P."/>
            <person name="Earthrowl M.E."/>
            <person name="Grafham D.V."/>
            <person name="Rubenfield M."/>
            <person name="French L."/>
            <person name="Steward C.A."/>
            <person name="Sims S.K."/>
            <person name="Jones M.C."/>
            <person name="Searle S."/>
            <person name="Scott C."/>
            <person name="Howe K."/>
            <person name="Hunt S.E."/>
            <person name="Andrews T.D."/>
            <person name="Gilbert J.G.R."/>
            <person name="Swarbreck D."/>
            <person name="Ashurst J.L."/>
            <person name="Taylor A."/>
            <person name="Battles J."/>
            <person name="Bird C.P."/>
            <person name="Ainscough R."/>
            <person name="Almeida J.P."/>
            <person name="Ashwell R.I.S."/>
            <person name="Ambrose K.D."/>
            <person name="Babbage A.K."/>
            <person name="Bagguley C.L."/>
            <person name="Bailey J."/>
            <person name="Banerjee R."/>
            <person name="Bates K."/>
            <person name="Beasley H."/>
            <person name="Bray-Allen S."/>
            <person name="Brown A.J."/>
            <person name="Brown J.Y."/>
            <person name="Burford D.C."/>
            <person name="Burrill W."/>
            <person name="Burton J."/>
            <person name="Cahill P."/>
            <person name="Camire D."/>
            <person name="Carter N.P."/>
            <person name="Chapman J.C."/>
            <person name="Clark S.Y."/>
            <person name="Clarke G."/>
            <person name="Clee C.M."/>
            <person name="Clegg S."/>
            <person name="Corby N."/>
            <person name="Coulson A."/>
            <person name="Dhami P."/>
            <person name="Dutta I."/>
            <person name="Dunn M."/>
            <person name="Faulkner L."/>
            <person name="Frankish A."/>
            <person name="Frankland J.A."/>
            <person name="Garner P."/>
            <person name="Garnett J."/>
            <person name="Gribble S."/>
            <person name="Griffiths C."/>
            <person name="Grocock R."/>
            <person name="Gustafson E."/>
            <person name="Hammond S."/>
            <person name="Harley J.L."/>
            <person name="Hart E."/>
            <person name="Heath P.D."/>
            <person name="Ho T.P."/>
            <person name="Hopkins B."/>
            <person name="Horne J."/>
            <person name="Howden P.J."/>
            <person name="Huckle E."/>
            <person name="Hynds C."/>
            <person name="Johnson C."/>
            <person name="Johnson D."/>
            <person name="Kana A."/>
            <person name="Kay M."/>
            <person name="Kimberley A.M."/>
            <person name="Kershaw J.K."/>
            <person name="Kokkinaki M."/>
            <person name="Laird G.K."/>
            <person name="Lawlor S."/>
            <person name="Lee H.M."/>
            <person name="Leongamornlert D.A."/>
            <person name="Laird G."/>
            <person name="Lloyd C."/>
            <person name="Lloyd D.M."/>
            <person name="Loveland J."/>
            <person name="Lovell J."/>
            <person name="McLaren S."/>
            <person name="McLay K.E."/>
            <person name="McMurray A."/>
            <person name="Mashreghi-Mohammadi M."/>
            <person name="Matthews L."/>
            <person name="Milne S."/>
            <person name="Nickerson T."/>
            <person name="Nguyen M."/>
            <person name="Overton-Larty E."/>
            <person name="Palmer S.A."/>
            <person name="Pearce A.V."/>
            <person name="Peck A.I."/>
            <person name="Pelan S."/>
            <person name="Phillimore B."/>
            <person name="Porter K."/>
            <person name="Rice C.M."/>
            <person name="Rogosin A."/>
            <person name="Ross M.T."/>
            <person name="Sarafidou T."/>
            <person name="Sehra H.K."/>
            <person name="Shownkeen R."/>
            <person name="Skuce C.D."/>
            <person name="Smith M."/>
            <person name="Standring L."/>
            <person name="Sycamore N."/>
            <person name="Tester J."/>
            <person name="Thorpe A."/>
            <person name="Torcasso W."/>
            <person name="Tracey A."/>
            <person name="Tromans A."/>
            <person name="Tsolas J."/>
            <person name="Wall M."/>
            <person name="Walsh J."/>
            <person name="Wang H."/>
            <person name="Weinstock K."/>
            <person name="West A.P."/>
            <person name="Willey D.L."/>
            <person name="Whitehead S.L."/>
            <person name="Wilming L."/>
            <person name="Wray P.W."/>
            <person name="Young L."/>
            <person name="Chen Y."/>
            <person name="Lovering R.C."/>
            <person name="Moschonas N.K."/>
            <person name="Siebert R."/>
            <person name="Fechtel K."/>
            <person name="Bentley D."/>
            <person name="Durbin R.M."/>
            <person name="Hubbard T."/>
            <person name="Doucette-Stamm L."/>
            <person name="Beck S."/>
            <person name="Smith D.R."/>
            <person name="Rogers J."/>
        </authorList>
    </citation>
    <scope>NUCLEOTIDE SEQUENCE [LARGE SCALE GENOMIC DNA]</scope>
</reference>
<reference key="2">
    <citation type="journal article" date="2004" name="Genome Res.">
        <title>The status, quality, and expansion of the NIH full-length cDNA project: the Mammalian Gene Collection (MGC).</title>
        <authorList>
            <consortium name="The MGC Project Team"/>
        </authorList>
    </citation>
    <scope>NUCLEOTIDE SEQUENCE [LARGE SCALE MRNA] (ISOFORMS 1; 2 AND 3)</scope>
    <source>
        <tissue>Testis</tissue>
    </source>
</reference>
<reference key="3">
    <citation type="journal article" date="2004" name="Nat. Genet.">
        <title>Complete sequencing and characterization of 21,243 full-length human cDNAs.</title>
        <authorList>
            <person name="Ota T."/>
            <person name="Suzuki Y."/>
            <person name="Nishikawa T."/>
            <person name="Otsuki T."/>
            <person name="Sugiyama T."/>
            <person name="Irie R."/>
            <person name="Wakamatsu A."/>
            <person name="Hayashi K."/>
            <person name="Sato H."/>
            <person name="Nagai K."/>
            <person name="Kimura K."/>
            <person name="Makita H."/>
            <person name="Sekine M."/>
            <person name="Obayashi M."/>
            <person name="Nishi T."/>
            <person name="Shibahara T."/>
            <person name="Tanaka T."/>
            <person name="Ishii S."/>
            <person name="Yamamoto J."/>
            <person name="Saito K."/>
            <person name="Kawai Y."/>
            <person name="Isono Y."/>
            <person name="Nakamura Y."/>
            <person name="Nagahari K."/>
            <person name="Murakami K."/>
            <person name="Yasuda T."/>
            <person name="Iwayanagi T."/>
            <person name="Wagatsuma M."/>
            <person name="Shiratori A."/>
            <person name="Sudo H."/>
            <person name="Hosoiri T."/>
            <person name="Kaku Y."/>
            <person name="Kodaira H."/>
            <person name="Kondo H."/>
            <person name="Sugawara M."/>
            <person name="Takahashi M."/>
            <person name="Kanda K."/>
            <person name="Yokoi T."/>
            <person name="Furuya T."/>
            <person name="Kikkawa E."/>
            <person name="Omura Y."/>
            <person name="Abe K."/>
            <person name="Kamihara K."/>
            <person name="Katsuta N."/>
            <person name="Sato K."/>
            <person name="Tanikawa M."/>
            <person name="Yamazaki M."/>
            <person name="Ninomiya K."/>
            <person name="Ishibashi T."/>
            <person name="Yamashita H."/>
            <person name="Murakawa K."/>
            <person name="Fujimori K."/>
            <person name="Tanai H."/>
            <person name="Kimata M."/>
            <person name="Watanabe M."/>
            <person name="Hiraoka S."/>
            <person name="Chiba Y."/>
            <person name="Ishida S."/>
            <person name="Ono Y."/>
            <person name="Takiguchi S."/>
            <person name="Watanabe S."/>
            <person name="Yosida M."/>
            <person name="Hotuta T."/>
            <person name="Kusano J."/>
            <person name="Kanehori K."/>
            <person name="Takahashi-Fujii A."/>
            <person name="Hara H."/>
            <person name="Tanase T.-O."/>
            <person name="Nomura Y."/>
            <person name="Togiya S."/>
            <person name="Komai F."/>
            <person name="Hara R."/>
            <person name="Takeuchi K."/>
            <person name="Arita M."/>
            <person name="Imose N."/>
            <person name="Musashino K."/>
            <person name="Yuuki H."/>
            <person name="Oshima A."/>
            <person name="Sasaki N."/>
            <person name="Aotsuka S."/>
            <person name="Yoshikawa Y."/>
            <person name="Matsunawa H."/>
            <person name="Ichihara T."/>
            <person name="Shiohata N."/>
            <person name="Sano S."/>
            <person name="Moriya S."/>
            <person name="Momiyama H."/>
            <person name="Satoh N."/>
            <person name="Takami S."/>
            <person name="Terashima Y."/>
            <person name="Suzuki O."/>
            <person name="Nakagawa S."/>
            <person name="Senoh A."/>
            <person name="Mizoguchi H."/>
            <person name="Goto Y."/>
            <person name="Shimizu F."/>
            <person name="Wakebe H."/>
            <person name="Hishigaki H."/>
            <person name="Watanabe T."/>
            <person name="Sugiyama A."/>
            <person name="Takemoto M."/>
            <person name="Kawakami B."/>
            <person name="Yamazaki M."/>
            <person name="Watanabe K."/>
            <person name="Kumagai A."/>
            <person name="Itakura S."/>
            <person name="Fukuzumi Y."/>
            <person name="Fujimori Y."/>
            <person name="Komiyama M."/>
            <person name="Tashiro H."/>
            <person name="Tanigami A."/>
            <person name="Fujiwara T."/>
            <person name="Ono T."/>
            <person name="Yamada K."/>
            <person name="Fujii Y."/>
            <person name="Ozaki K."/>
            <person name="Hirao M."/>
            <person name="Ohmori Y."/>
            <person name="Kawabata A."/>
            <person name="Hikiji T."/>
            <person name="Kobatake N."/>
            <person name="Inagaki H."/>
            <person name="Ikema Y."/>
            <person name="Okamoto S."/>
            <person name="Okitani R."/>
            <person name="Kawakami T."/>
            <person name="Noguchi S."/>
            <person name="Itoh T."/>
            <person name="Shigeta K."/>
            <person name="Senba T."/>
            <person name="Matsumura K."/>
            <person name="Nakajima Y."/>
            <person name="Mizuno T."/>
            <person name="Morinaga M."/>
            <person name="Sasaki M."/>
            <person name="Togashi T."/>
            <person name="Oyama M."/>
            <person name="Hata H."/>
            <person name="Watanabe M."/>
            <person name="Komatsu T."/>
            <person name="Mizushima-Sugano J."/>
            <person name="Satoh T."/>
            <person name="Shirai Y."/>
            <person name="Takahashi Y."/>
            <person name="Nakagawa K."/>
            <person name="Okumura K."/>
            <person name="Nagase T."/>
            <person name="Nomura N."/>
            <person name="Kikuchi H."/>
            <person name="Masuho Y."/>
            <person name="Yamashita R."/>
            <person name="Nakai K."/>
            <person name="Yada T."/>
            <person name="Nakamura Y."/>
            <person name="Ohara O."/>
            <person name="Isogai T."/>
            <person name="Sugano S."/>
        </authorList>
    </citation>
    <scope>NUCLEOTIDE SEQUENCE [LARGE SCALE MRNA] OF 659-1238 (ISOFORMS 1/4)</scope>
    <source>
        <tissue>Lymphoblast</tissue>
    </source>
</reference>
<reference key="4">
    <citation type="journal article" date="2007" name="BMC Genomics">
        <title>The full-ORF clone resource of the German cDNA consortium.</title>
        <authorList>
            <person name="Bechtel S."/>
            <person name="Rosenfelder H."/>
            <person name="Duda A."/>
            <person name="Schmidt C.P."/>
            <person name="Ernst U."/>
            <person name="Wellenreuther R."/>
            <person name="Mehrle A."/>
            <person name="Schuster C."/>
            <person name="Bahr A."/>
            <person name="Bloecker H."/>
            <person name="Heubner D."/>
            <person name="Hoerlein A."/>
            <person name="Michel G."/>
            <person name="Wedler H."/>
            <person name="Koehrer K."/>
            <person name="Ottenwaelder B."/>
            <person name="Poustka A."/>
            <person name="Wiemann S."/>
            <person name="Schupp I."/>
        </authorList>
    </citation>
    <scope>NUCLEOTIDE SEQUENCE [LARGE SCALE MRNA] OF 745-1238 (ISOFORMS 1/4)</scope>
    <source>
        <tissue>Uterus</tissue>
    </source>
</reference>
<reference key="5">
    <citation type="journal article" date="2002" name="Chin. Med. J.">
        <title>A novel erythroid differentiation related gene EDRF1 upregulating globin gene expression in HEL cells.</title>
        <authorList>
            <person name="Wang D."/>
            <person name="Li Y."/>
            <person name="Shen B."/>
        </authorList>
    </citation>
    <scope>FUNCTION</scope>
</reference>
<reference key="6">
    <citation type="journal article" date="2011" name="BMC Syst. Biol.">
        <title>Initial characterization of the human central proteome.</title>
        <authorList>
            <person name="Burkard T.R."/>
            <person name="Planyavsky M."/>
            <person name="Kaupe I."/>
            <person name="Breitwieser F.P."/>
            <person name="Buerckstuemmer T."/>
            <person name="Bennett K.L."/>
            <person name="Superti-Furga G."/>
            <person name="Colinge J."/>
        </authorList>
    </citation>
    <scope>IDENTIFICATION BY MASS SPECTROMETRY [LARGE SCALE ANALYSIS]</scope>
</reference>
<reference key="7">
    <citation type="journal article" date="2006" name="Science">
        <title>The consensus coding sequences of human breast and colorectal cancers.</title>
        <authorList>
            <person name="Sjoeblom T."/>
            <person name="Jones S."/>
            <person name="Wood L.D."/>
            <person name="Parsons D.W."/>
            <person name="Lin J."/>
            <person name="Barber T.D."/>
            <person name="Mandelker D."/>
            <person name="Leary R.J."/>
            <person name="Ptak J."/>
            <person name="Silliman N."/>
            <person name="Szabo S."/>
            <person name="Buckhaults P."/>
            <person name="Farrell C."/>
            <person name="Meeh P."/>
            <person name="Markowitz S.D."/>
            <person name="Willis J."/>
            <person name="Dawson D."/>
            <person name="Willson J.K.V."/>
            <person name="Gazdar A.F."/>
            <person name="Hartigan J."/>
            <person name="Wu L."/>
            <person name="Liu C."/>
            <person name="Parmigiani G."/>
            <person name="Park B.H."/>
            <person name="Bachman K.E."/>
            <person name="Papadopoulos N."/>
            <person name="Vogelstein B."/>
            <person name="Kinzler K.W."/>
            <person name="Velculescu V.E."/>
        </authorList>
    </citation>
    <scope>VARIANTS [LARGE SCALE ANALYSIS] SER-45 AND PHE-95</scope>
</reference>
<name>EDRF1_HUMAN</name>
<feature type="chain" id="PRO_0000244260" description="Erythroid differentiation-related factor 1">
    <location>
        <begin position="1"/>
        <end position="1238"/>
    </location>
</feature>
<feature type="repeat" description="TPR 1">
    <location>
        <begin position="693"/>
        <end position="726"/>
    </location>
</feature>
<feature type="repeat" description="TPR 2">
    <location>
        <begin position="914"/>
        <end position="953"/>
    </location>
</feature>
<feature type="region of interest" description="Disordered" evidence="1">
    <location>
        <begin position="1"/>
        <end position="38"/>
    </location>
</feature>
<feature type="region of interest" description="Disordered" evidence="1">
    <location>
        <begin position="220"/>
        <end position="268"/>
    </location>
</feature>
<feature type="region of interest" description="Disordered" evidence="1">
    <location>
        <begin position="517"/>
        <end position="561"/>
    </location>
</feature>
<feature type="region of interest" description="Disordered" evidence="1">
    <location>
        <begin position="620"/>
        <end position="647"/>
    </location>
</feature>
<feature type="compositionally biased region" description="Low complexity" evidence="1">
    <location>
        <begin position="9"/>
        <end position="38"/>
    </location>
</feature>
<feature type="compositionally biased region" description="Low complexity" evidence="1">
    <location>
        <begin position="223"/>
        <end position="241"/>
    </location>
</feature>
<feature type="compositionally biased region" description="Low complexity" evidence="1">
    <location>
        <begin position="253"/>
        <end position="263"/>
    </location>
</feature>
<feature type="compositionally biased region" description="Acidic residues" evidence="1">
    <location>
        <begin position="530"/>
        <end position="547"/>
    </location>
</feature>
<feature type="splice variant" id="VSP_035712" description="In isoform 4." evidence="5">
    <location>
        <begin position="266"/>
        <end position="299"/>
    </location>
</feature>
<feature type="splice variant" id="VSP_035713" description="In isoform 3." evidence="4">
    <original>PSCAFPV</original>
    <variation>LCISSLP</variation>
    <location>
        <begin position="587"/>
        <end position="593"/>
    </location>
</feature>
<feature type="splice variant" id="VSP_035714" description="In isoform 3." evidence="4">
    <location>
        <begin position="594"/>
        <end position="1238"/>
    </location>
</feature>
<feature type="splice variant" id="VSP_019531" description="In isoform 2." evidence="4">
    <original>AWAT</original>
    <variation>KTGK</variation>
    <location>
        <begin position="793"/>
        <end position="796"/>
    </location>
</feature>
<feature type="splice variant" id="VSP_019532" description="In isoform 2." evidence="4">
    <location>
        <begin position="797"/>
        <end position="1238"/>
    </location>
</feature>
<feature type="sequence variant" id="VAR_035862" description="In a colorectal cancer sample; somatic mutation; dbSNP:rs143528650." evidence="3">
    <original>N</original>
    <variation>S</variation>
    <location>
        <position position="45"/>
    </location>
</feature>
<feature type="sequence variant" id="VAR_035863" description="In a colorectal cancer sample; somatic mutation." evidence="3">
    <original>L</original>
    <variation>F</variation>
    <location>
        <position position="95"/>
    </location>
</feature>
<feature type="sequence conflict" description="In Ref. 2; AAH26172." evidence="5" ref="2">
    <original>E</original>
    <variation>G</variation>
    <location>
        <position position="443"/>
    </location>
</feature>
<accession>Q3B7T1</accession>
<accession>B2RC65</accession>
<accession>Q3KR40</accession>
<accession>Q4G190</accession>
<accession>Q5VZQ4</accession>
<accession>Q8IZ74</accession>
<accession>Q9Y3W4</accession>
<keyword id="KW-0010">Activator</keyword>
<keyword id="KW-0025">Alternative splicing</keyword>
<keyword id="KW-0539">Nucleus</keyword>
<keyword id="KW-1267">Proteomics identification</keyword>
<keyword id="KW-1185">Reference proteome</keyword>
<keyword id="KW-0677">Repeat</keyword>
<keyword id="KW-0802">TPR repeat</keyword>
<keyword id="KW-0804">Transcription</keyword>
<keyword id="KW-0805">Transcription regulation</keyword>
<comment type="function">
    <text evidence="2">Transcription factor involved in erythroid differentiation. Involved in transcriptional activation of the globin gene.</text>
</comment>
<comment type="interaction">
    <interactant intactId="EBI-2870947">
        <id>Q3B7T1</id>
    </interactant>
    <interactant intactId="EBI-77613">
        <id>P05067</id>
        <label>APP</label>
    </interactant>
    <organismsDiffer>false</organismsDiffer>
    <experiments>3</experiments>
</comment>
<comment type="interaction">
    <interactant intactId="EBI-2870947">
        <id>Q3B7T1</id>
    </interactant>
    <interactant intactId="EBI-930964">
        <id>P54253</id>
        <label>ATXN1</label>
    </interactant>
    <organismsDiffer>false</organismsDiffer>
    <experiments>3</experiments>
</comment>
<comment type="interaction">
    <interactant intactId="EBI-2870947">
        <id>Q3B7T1</id>
    </interactant>
    <interactant intactId="EBI-946046">
        <id>P54252</id>
        <label>ATXN3</label>
    </interactant>
    <organismsDiffer>false</organismsDiffer>
    <experiments>3</experiments>
</comment>
<comment type="interaction">
    <interactant intactId="EBI-2870947">
        <id>Q3B7T1</id>
    </interactant>
    <interactant intactId="EBI-466029">
        <id>P42858</id>
        <label>HTT</label>
    </interactant>
    <organismsDiffer>false</organismsDiffer>
    <experiments>18</experiments>
</comment>
<comment type="interaction">
    <interactant intactId="EBI-2870947">
        <id>Q3B7T1</id>
    </interactant>
    <interactant intactId="EBI-721853">
        <id>O14832</id>
        <label>PHYH</label>
    </interactant>
    <organismsDiffer>false</organismsDiffer>
    <experiments>3</experiments>
</comment>
<comment type="interaction">
    <interactant intactId="EBI-2870947">
        <id>Q3B7T1</id>
    </interactant>
    <interactant intactId="EBI-720609">
        <id>O76024</id>
        <label>WFS1</label>
    </interactant>
    <organismsDiffer>false</organismsDiffer>
    <experiments>3</experiments>
</comment>
<comment type="interaction">
    <interactant intactId="EBI-10240074">
        <id>Q3B7T1-5</id>
    </interactant>
    <interactant intactId="EBI-949824">
        <id>O00471</id>
        <label>EXOC5</label>
    </interactant>
    <organismsDiffer>false</organismsDiffer>
    <experiments>3</experiments>
</comment>
<comment type="interaction">
    <interactant intactId="EBI-10240074">
        <id>Q3B7T1-5</id>
    </interactant>
    <interactant intactId="EBI-6872807">
        <id>Q8N0S2</id>
        <label>SYCE1</label>
    </interactant>
    <organismsDiffer>false</organismsDiffer>
    <experiments>3</experiments>
</comment>
<comment type="interaction">
    <interactant intactId="EBI-10240074">
        <id>Q3B7T1-5</id>
    </interactant>
    <interactant intactId="EBI-722877">
        <id>Q99081</id>
        <label>TCF12</label>
    </interactant>
    <organismsDiffer>false</organismsDiffer>
    <experiments>3</experiments>
</comment>
<comment type="subcellular location">
    <subcellularLocation>
        <location evidence="5">Nucleus</location>
    </subcellularLocation>
</comment>
<comment type="alternative products">
    <event type="alternative splicing"/>
    <isoform>
        <id>Q3B7T1-1</id>
        <name>1</name>
        <sequence type="displayed"/>
    </isoform>
    <isoform>
        <id>Q3B7T1-3</id>
        <name>2</name>
        <sequence type="described" ref="VSP_019531 VSP_019532"/>
    </isoform>
    <isoform>
        <id>Q3B7T1-4</id>
        <name>3</name>
        <sequence type="described" ref="VSP_035713 VSP_035714"/>
    </isoform>
    <isoform>
        <id>Q3B7T1-5</id>
        <name>4</name>
        <sequence type="described" ref="VSP_035712"/>
    </isoform>
</comment>
<comment type="miscellaneous">
    <molecule>Isoform 2</molecule>
    <text evidence="5">May be produced at very low levels due to a premature stop codon in the mRNA, leading to nonsense-mediated mRNA decay.</text>
</comment>
<comment type="miscellaneous">
    <molecule>Isoform 3</molecule>
    <text evidence="5">May be produced at very low levels due to a premature stop codon in the mRNA, leading to nonsense-mediated mRNA decay.</text>
</comment>
<comment type="sequence caution" evidence="5">
    <conflict type="erroneous initiation">
        <sequence resource="EMBL-CDS" id="BAG37462"/>
    </conflict>
</comment>
<gene>
    <name type="primary">EDRF1</name>
    <name type="synonym">C10orf137</name>
</gene>
<proteinExistence type="evidence at protein level"/>
<organism>
    <name type="scientific">Homo sapiens</name>
    <name type="common">Human</name>
    <dbReference type="NCBI Taxonomy" id="9606"/>
    <lineage>
        <taxon>Eukaryota</taxon>
        <taxon>Metazoa</taxon>
        <taxon>Chordata</taxon>
        <taxon>Craniata</taxon>
        <taxon>Vertebrata</taxon>
        <taxon>Euteleostomi</taxon>
        <taxon>Mammalia</taxon>
        <taxon>Eutheria</taxon>
        <taxon>Euarchontoglires</taxon>
        <taxon>Primates</taxon>
        <taxon>Haplorrhini</taxon>
        <taxon>Catarrhini</taxon>
        <taxon>Hominidae</taxon>
        <taxon>Homo</taxon>
    </lineage>
</organism>
<evidence type="ECO:0000256" key="1">
    <source>
        <dbReference type="SAM" id="MobiDB-lite"/>
    </source>
</evidence>
<evidence type="ECO:0000269" key="2">
    <source>
    </source>
</evidence>
<evidence type="ECO:0000269" key="3">
    <source>
    </source>
</evidence>
<evidence type="ECO:0000303" key="4">
    <source>
    </source>
</evidence>
<evidence type="ECO:0000305" key="5"/>
<dbReference type="EMBL" id="AL158835">
    <property type="status" value="NOT_ANNOTATED_CDS"/>
    <property type="molecule type" value="Genomic_DNA"/>
</dbReference>
<dbReference type="EMBL" id="BC026172">
    <property type="protein sequence ID" value="AAH26172.1"/>
    <property type="molecule type" value="mRNA"/>
</dbReference>
<dbReference type="EMBL" id="BC105929">
    <property type="protein sequence ID" value="AAI05930.1"/>
    <property type="molecule type" value="mRNA"/>
</dbReference>
<dbReference type="EMBL" id="BC107479">
    <property type="protein sequence ID" value="AAI07480.1"/>
    <property type="molecule type" value="mRNA"/>
</dbReference>
<dbReference type="EMBL" id="AK314958">
    <property type="protein sequence ID" value="BAG37462.1"/>
    <property type="status" value="ALT_INIT"/>
    <property type="molecule type" value="mRNA"/>
</dbReference>
<dbReference type="EMBL" id="AL050102">
    <property type="protein sequence ID" value="CAB43273.1"/>
    <property type="molecule type" value="mRNA"/>
</dbReference>
<dbReference type="CCDS" id="CCDS55733.1">
    <molecule id="Q3B7T1-1"/>
</dbReference>
<dbReference type="CCDS" id="CCDS7646.1">
    <molecule id="Q3B7T1-5"/>
</dbReference>
<dbReference type="PIR" id="T08751">
    <property type="entry name" value="T08751"/>
</dbReference>
<dbReference type="RefSeq" id="NP_001189367.1">
    <molecule id="Q3B7T1-1"/>
    <property type="nucleotide sequence ID" value="NM_001202438.2"/>
</dbReference>
<dbReference type="RefSeq" id="NP_056423.2">
    <molecule id="Q3B7T1-5"/>
    <property type="nucleotide sequence ID" value="NM_015608.2"/>
</dbReference>
<dbReference type="RefSeq" id="XP_047280995.1">
    <molecule id="Q3B7T1-3"/>
    <property type="nucleotide sequence ID" value="XM_047425039.1"/>
</dbReference>
<dbReference type="RefSeq" id="XP_054221494.1">
    <molecule id="Q3B7T1-3"/>
    <property type="nucleotide sequence ID" value="XM_054365519.1"/>
</dbReference>
<dbReference type="BioGRID" id="117548">
    <property type="interactions" value="113"/>
</dbReference>
<dbReference type="FunCoup" id="Q3B7T1">
    <property type="interactions" value="845"/>
</dbReference>
<dbReference type="IntAct" id="Q3B7T1">
    <property type="interactions" value="78"/>
</dbReference>
<dbReference type="MINT" id="Q3B7T1"/>
<dbReference type="STRING" id="9606.ENSP00000349244"/>
<dbReference type="iPTMnet" id="Q3B7T1"/>
<dbReference type="MetOSite" id="Q3B7T1"/>
<dbReference type="PhosphoSitePlus" id="Q3B7T1"/>
<dbReference type="BioMuta" id="EDRF1"/>
<dbReference type="DMDM" id="109826957"/>
<dbReference type="jPOST" id="Q3B7T1"/>
<dbReference type="MassIVE" id="Q3B7T1"/>
<dbReference type="PaxDb" id="9606-ENSP00000349244"/>
<dbReference type="PeptideAtlas" id="Q3B7T1"/>
<dbReference type="ProteomicsDB" id="61658">
    <molecule id="Q3B7T1-1"/>
</dbReference>
<dbReference type="ProteomicsDB" id="61659">
    <molecule id="Q3B7T1-3"/>
</dbReference>
<dbReference type="ProteomicsDB" id="61660">
    <molecule id="Q3B7T1-4"/>
</dbReference>
<dbReference type="ProteomicsDB" id="61661">
    <molecule id="Q3B7T1-5"/>
</dbReference>
<dbReference type="Pumba" id="Q3B7T1"/>
<dbReference type="Antibodypedia" id="32399">
    <property type="antibodies" value="55 antibodies from 13 providers"/>
</dbReference>
<dbReference type="DNASU" id="26098"/>
<dbReference type="Ensembl" id="ENST00000337623.7">
    <molecule id="Q3B7T1-5"/>
    <property type="protein sequence ID" value="ENSP00000336727.3"/>
    <property type="gene ID" value="ENSG00000107938.18"/>
</dbReference>
<dbReference type="Ensembl" id="ENST00000356792.9">
    <molecule id="Q3B7T1-1"/>
    <property type="protein sequence ID" value="ENSP00000349244.4"/>
    <property type="gene ID" value="ENSG00000107938.18"/>
</dbReference>
<dbReference type="Ensembl" id="ENST00000368815.6">
    <molecule id="Q3B7T1-4"/>
    <property type="protein sequence ID" value="ENSP00000357805.2"/>
    <property type="gene ID" value="ENSG00000107938.18"/>
</dbReference>
<dbReference type="Ensembl" id="ENST00000419769.6">
    <molecule id="Q3B7T1-3"/>
    <property type="protein sequence ID" value="ENSP00000396544.2"/>
    <property type="gene ID" value="ENSG00000107938.18"/>
</dbReference>
<dbReference type="GeneID" id="26098"/>
<dbReference type="KEGG" id="hsa:26098"/>
<dbReference type="MANE-Select" id="ENST00000356792.9">
    <property type="protein sequence ID" value="ENSP00000349244.4"/>
    <property type="RefSeq nucleotide sequence ID" value="NM_001202438.2"/>
    <property type="RefSeq protein sequence ID" value="NP_001189367.1"/>
</dbReference>
<dbReference type="UCSC" id="uc001lio.2">
    <molecule id="Q3B7T1-1"/>
    <property type="organism name" value="human"/>
</dbReference>
<dbReference type="AGR" id="HGNC:24640"/>
<dbReference type="CTD" id="26098"/>
<dbReference type="DisGeNET" id="26098"/>
<dbReference type="GeneCards" id="EDRF1"/>
<dbReference type="HGNC" id="HGNC:24640">
    <property type="gene designation" value="EDRF1"/>
</dbReference>
<dbReference type="HPA" id="ENSG00000107938">
    <property type="expression patterns" value="Low tissue specificity"/>
</dbReference>
<dbReference type="MIM" id="620463">
    <property type="type" value="gene"/>
</dbReference>
<dbReference type="neXtProt" id="NX_Q3B7T1"/>
<dbReference type="OpenTargets" id="ENSG00000107938"/>
<dbReference type="PharmGKB" id="PA134873666"/>
<dbReference type="VEuPathDB" id="HostDB:ENSG00000107938"/>
<dbReference type="eggNOG" id="ENOG502QTNC">
    <property type="taxonomic scope" value="Eukaryota"/>
</dbReference>
<dbReference type="GeneTree" id="ENSGT00390000014797"/>
<dbReference type="HOGENOM" id="CLU_019306_0_0_1"/>
<dbReference type="InParanoid" id="Q3B7T1"/>
<dbReference type="OMA" id="AFLYCNM"/>
<dbReference type="OrthoDB" id="419432at2759"/>
<dbReference type="PAN-GO" id="Q3B7T1">
    <property type="GO annotations" value="1 GO annotation based on evolutionary models"/>
</dbReference>
<dbReference type="PhylomeDB" id="Q3B7T1"/>
<dbReference type="TreeFam" id="TF324739"/>
<dbReference type="PathwayCommons" id="Q3B7T1"/>
<dbReference type="SignaLink" id="Q3B7T1"/>
<dbReference type="BioGRID-ORCS" id="26098">
    <property type="hits" value="19 hits in 1152 CRISPR screens"/>
</dbReference>
<dbReference type="ChiTaRS" id="EDRF1">
    <property type="organism name" value="human"/>
</dbReference>
<dbReference type="GenomeRNAi" id="26098"/>
<dbReference type="Pharos" id="Q3B7T1">
    <property type="development level" value="Tbio"/>
</dbReference>
<dbReference type="PRO" id="PR:Q3B7T1"/>
<dbReference type="Proteomes" id="UP000005640">
    <property type="component" value="Chromosome 10"/>
</dbReference>
<dbReference type="RNAct" id="Q3B7T1">
    <property type="molecule type" value="protein"/>
</dbReference>
<dbReference type="Bgee" id="ENSG00000107938">
    <property type="expression patterns" value="Expressed in right testis and 192 other cell types or tissues"/>
</dbReference>
<dbReference type="ExpressionAtlas" id="Q3B7T1">
    <property type="expression patterns" value="baseline and differential"/>
</dbReference>
<dbReference type="GO" id="GO:0005634">
    <property type="term" value="C:nucleus"/>
    <property type="evidence" value="ECO:0007669"/>
    <property type="project" value="UniProtKB-SubCell"/>
</dbReference>
<dbReference type="GO" id="GO:0045893">
    <property type="term" value="P:positive regulation of DNA-templated transcription"/>
    <property type="evidence" value="ECO:0000315"/>
    <property type="project" value="UniProtKB"/>
</dbReference>
<dbReference type="InterPro" id="IPR056582">
    <property type="entry name" value="EDRF1_N"/>
</dbReference>
<dbReference type="InterPro" id="IPR056583">
    <property type="entry name" value="EDRF1_TPR"/>
</dbReference>
<dbReference type="PANTHER" id="PTHR15000">
    <property type="entry name" value="ERYTHROID DIFFERENTIATION-RELATED FACTOR 1"/>
    <property type="match status" value="1"/>
</dbReference>
<dbReference type="PANTHER" id="PTHR15000:SF1">
    <property type="entry name" value="ERYTHROID DIFFERENTIATION-RELATED FACTOR 1"/>
    <property type="match status" value="1"/>
</dbReference>
<dbReference type="Pfam" id="PF23788">
    <property type="entry name" value="EDRF1_N"/>
    <property type="match status" value="1"/>
</dbReference>
<dbReference type="Pfam" id="PF23723">
    <property type="entry name" value="TPR_EDRF1"/>
    <property type="match status" value="1"/>
</dbReference>
<protein>
    <recommendedName>
        <fullName>Erythroid differentiation-related factor 1</fullName>
    </recommendedName>
</protein>
<sequence length="1238" mass="138528">MGDAKEAGAEGPPAGAAARGGLSLLSQGESEESSAQGSALFLGGNEVKSRAVVKYSSAPPRTAFARLEEKTDLKLPPANWLRESAKLGPAGTTILGNSKKSKPFSSFGMAYDFIDSVGNDVDVVSDSENIKKLLKIPYSKSHVSMAVHRIGRTLLLDELDIQELFMRSSQTGDWTWLKEFYQRLIDQKWQRKKKSKEHWYQKAILSKFLYYSINGDGAAQPVSSTAEQQESSSSDQTNDSEGASWPAPFEMPSSVSEDPSASSQGSEPLEPSYIVGHVASAPKEQNLITLFNDGEHSQGLKNDFVRNILWTFEDIHMLVGSNMPIFGGGRYPAVSLRLRDNNKPINVLTGIDYWLDNLICNVPELVMCFHVNGIVQKYEMIKTEEIPNLENSNFSTKVIKDIAQNILSFLKSNCTKEGHTYWLFKASGSDIVKLYDLTTLCEETEDKYQNPFTMPVAILLYKVACNMMMKKNQNKKHYGTIRTLLLNCLKLLDKSRHPQIIASANYMLSELFQLDEPKKEENSESPLNENSDESYSEEEEEMPDSDENGSYSTSSDPSDDSKAVAIIKSVGELSVPEKYKSIHQIRPSCAFPVCHDTEERCRLVLSYVLEGLKSVDSSIKKESDLPAADPSTPIPLKYEDESSRGGPEGLEKQMALFLDKMGSLQKGNYSSQSGMIPGSWQHKMKLQLILKSSKAYYVLSDAAMSLQKYGRALRYIKLALQSHDTYCCLCTNMLSEVLLFLSQYLTLCGDIQLMLAQNANNRAAHLEEFHYQTKEDQEILHSLHRESSCQGFAWATDLSTDLESQLSVSCKCYEAANEILQFSDLKSQNPEHYVQVLKRMGNIRNEIGVFYMNQAAALQSERLVSKSVSAAEQQLWKKSFSCFEKGIHNFESIEDATNAALLLCNTGRLMRICAQAHCGAGDELKREFSPEEGLYYNKAIDYYLKALRSLGTRDIHPAVWDSVNWELSTTYFTMATLQQDYAPLSRKAQEQIEKEVSEAMMKSLKYCDVDSVSARQPLCQYRAATIHHRLASMYHSCLRNQVGDEHLRKQHRVLADLHYSKAAKLFQLLKDAPCELLRVQLERVAFAEFQMTSQNSNVGKLKTLSGALDIMVRTEHAFQLIQKELIEEFGQPKSGDAAAAADASPSLNREEVMKLLSIFESRLSFLLLQSIKLLSSTKKKTSNNIEDDTILKTNKHIYSQLLRATANKTATLLERINVIVHLLGQLAAGSAASSNAVQ</sequence>